<reference key="1">
    <citation type="journal article" date="2009" name="PLoS Genet.">
        <title>Organised genome dynamics in the Escherichia coli species results in highly diverse adaptive paths.</title>
        <authorList>
            <person name="Touchon M."/>
            <person name="Hoede C."/>
            <person name="Tenaillon O."/>
            <person name="Barbe V."/>
            <person name="Baeriswyl S."/>
            <person name="Bidet P."/>
            <person name="Bingen E."/>
            <person name="Bonacorsi S."/>
            <person name="Bouchier C."/>
            <person name="Bouvet O."/>
            <person name="Calteau A."/>
            <person name="Chiapello H."/>
            <person name="Clermont O."/>
            <person name="Cruveiller S."/>
            <person name="Danchin A."/>
            <person name="Diard M."/>
            <person name="Dossat C."/>
            <person name="Karoui M.E."/>
            <person name="Frapy E."/>
            <person name="Garry L."/>
            <person name="Ghigo J.M."/>
            <person name="Gilles A.M."/>
            <person name="Johnson J."/>
            <person name="Le Bouguenec C."/>
            <person name="Lescat M."/>
            <person name="Mangenot S."/>
            <person name="Martinez-Jehanne V."/>
            <person name="Matic I."/>
            <person name="Nassif X."/>
            <person name="Oztas S."/>
            <person name="Petit M.A."/>
            <person name="Pichon C."/>
            <person name="Rouy Z."/>
            <person name="Ruf C.S."/>
            <person name="Schneider D."/>
            <person name="Tourret J."/>
            <person name="Vacherie B."/>
            <person name="Vallenet D."/>
            <person name="Medigue C."/>
            <person name="Rocha E.P.C."/>
            <person name="Denamur E."/>
        </authorList>
    </citation>
    <scope>NUCLEOTIDE SEQUENCE [LARGE SCALE GENOMIC DNA]</scope>
    <source>
        <strain>S88 / ExPEC</strain>
    </source>
</reference>
<accession>B7MBV8</accession>
<proteinExistence type="inferred from homology"/>
<protein>
    <recommendedName>
        <fullName evidence="1">UDP-N-acetylglucosamine 1-carboxyvinyltransferase</fullName>
        <ecNumber evidence="1">2.5.1.7</ecNumber>
    </recommendedName>
    <alternativeName>
        <fullName evidence="1">Enoylpyruvate transferase</fullName>
    </alternativeName>
    <alternativeName>
        <fullName evidence="1">UDP-N-acetylglucosamine enolpyruvyl transferase</fullName>
        <shortName evidence="1">EPT</shortName>
    </alternativeName>
</protein>
<sequence>MDKFRVQGPTKLQGEVTISGAKNAALPILFAALLAEEPVEIQNVPKLKDVDTSMKLLSQLGAKVERNGSVHIDARDVNVFCAPYDLVKTMRASIWALGPLVARFGQGQVSLPGGCTIGARPVDLHISGLEQLGATIKLEEGYVKASVDGRLKGAHIVMDKVSVGATVTIMCAATLAEGTTIIENAAREPEIVDTANFLITLGAKISGQGTDRIVIEGVERLGGGVYRVLPDRIETGTFLVAAAISRGKIICRNAQPDTLDAVLAKLRDAGADIEVGEDWISLDMHGKRPKAVNVRTAPHPAFPTDMQAQFTLLNLVAEGTGFITETVFENRFMHVPELSRMGAHAEIESNTVICHGVEKLSGAQVMATDLRASASLVLAGCIAEGTTVVDRIYHIDRGYERIEDKLRALGANIERVKGE</sequence>
<feature type="chain" id="PRO_1000117504" description="UDP-N-acetylglucosamine 1-carboxyvinyltransferase">
    <location>
        <begin position="1"/>
        <end position="419"/>
    </location>
</feature>
<feature type="active site" description="Proton donor" evidence="1">
    <location>
        <position position="115"/>
    </location>
</feature>
<feature type="binding site" evidence="1">
    <location>
        <begin position="22"/>
        <end position="23"/>
    </location>
    <ligand>
        <name>phosphoenolpyruvate</name>
        <dbReference type="ChEBI" id="CHEBI:58702"/>
    </ligand>
</feature>
<feature type="binding site" evidence="1">
    <location>
        <position position="91"/>
    </location>
    <ligand>
        <name>UDP-N-acetyl-alpha-D-glucosamine</name>
        <dbReference type="ChEBI" id="CHEBI:57705"/>
    </ligand>
</feature>
<feature type="binding site" evidence="1">
    <location>
        <begin position="120"/>
        <end position="124"/>
    </location>
    <ligand>
        <name>UDP-N-acetyl-alpha-D-glucosamine</name>
        <dbReference type="ChEBI" id="CHEBI:57705"/>
    </ligand>
</feature>
<feature type="binding site" evidence="1">
    <location>
        <begin position="160"/>
        <end position="163"/>
    </location>
    <ligand>
        <name>UDP-N-acetyl-alpha-D-glucosamine</name>
        <dbReference type="ChEBI" id="CHEBI:57705"/>
    </ligand>
</feature>
<feature type="binding site" evidence="1">
    <location>
        <position position="305"/>
    </location>
    <ligand>
        <name>UDP-N-acetyl-alpha-D-glucosamine</name>
        <dbReference type="ChEBI" id="CHEBI:57705"/>
    </ligand>
</feature>
<feature type="binding site" evidence="1">
    <location>
        <position position="327"/>
    </location>
    <ligand>
        <name>UDP-N-acetyl-alpha-D-glucosamine</name>
        <dbReference type="ChEBI" id="CHEBI:57705"/>
    </ligand>
</feature>
<feature type="modified residue" description="2-(S-cysteinyl)pyruvic acid O-phosphothioketal" evidence="1">
    <location>
        <position position="115"/>
    </location>
</feature>
<gene>
    <name evidence="1" type="primary">murA</name>
    <name type="ordered locus">ECS88_3571</name>
</gene>
<comment type="function">
    <text evidence="1">Cell wall formation. Adds enolpyruvyl to UDP-N-acetylglucosamine.</text>
</comment>
<comment type="catalytic activity">
    <reaction evidence="1">
        <text>phosphoenolpyruvate + UDP-N-acetyl-alpha-D-glucosamine = UDP-N-acetyl-3-O-(1-carboxyvinyl)-alpha-D-glucosamine + phosphate</text>
        <dbReference type="Rhea" id="RHEA:18681"/>
        <dbReference type="ChEBI" id="CHEBI:43474"/>
        <dbReference type="ChEBI" id="CHEBI:57705"/>
        <dbReference type="ChEBI" id="CHEBI:58702"/>
        <dbReference type="ChEBI" id="CHEBI:68483"/>
        <dbReference type="EC" id="2.5.1.7"/>
    </reaction>
</comment>
<comment type="pathway">
    <text evidence="1">Cell wall biogenesis; peptidoglycan biosynthesis.</text>
</comment>
<comment type="subcellular location">
    <subcellularLocation>
        <location evidence="1">Cytoplasm</location>
    </subcellularLocation>
</comment>
<comment type="similarity">
    <text evidence="1">Belongs to the EPSP synthase family. MurA subfamily.</text>
</comment>
<evidence type="ECO:0000255" key="1">
    <source>
        <dbReference type="HAMAP-Rule" id="MF_00111"/>
    </source>
</evidence>
<name>MURA_ECO45</name>
<dbReference type="EC" id="2.5.1.7" evidence="1"/>
<dbReference type="EMBL" id="CU928161">
    <property type="protein sequence ID" value="CAR04799.1"/>
    <property type="molecule type" value="Genomic_DNA"/>
</dbReference>
<dbReference type="RefSeq" id="WP_000357259.1">
    <property type="nucleotide sequence ID" value="NC_011742.1"/>
</dbReference>
<dbReference type="SMR" id="B7MBV8"/>
<dbReference type="GeneID" id="93778792"/>
<dbReference type="KEGG" id="ecz:ECS88_3571"/>
<dbReference type="HOGENOM" id="CLU_027387_0_0_6"/>
<dbReference type="UniPathway" id="UPA00219"/>
<dbReference type="Proteomes" id="UP000000747">
    <property type="component" value="Chromosome"/>
</dbReference>
<dbReference type="GO" id="GO:0005737">
    <property type="term" value="C:cytoplasm"/>
    <property type="evidence" value="ECO:0007669"/>
    <property type="project" value="UniProtKB-SubCell"/>
</dbReference>
<dbReference type="GO" id="GO:0008760">
    <property type="term" value="F:UDP-N-acetylglucosamine 1-carboxyvinyltransferase activity"/>
    <property type="evidence" value="ECO:0007669"/>
    <property type="project" value="UniProtKB-UniRule"/>
</dbReference>
<dbReference type="GO" id="GO:0051301">
    <property type="term" value="P:cell division"/>
    <property type="evidence" value="ECO:0007669"/>
    <property type="project" value="UniProtKB-KW"/>
</dbReference>
<dbReference type="GO" id="GO:0071555">
    <property type="term" value="P:cell wall organization"/>
    <property type="evidence" value="ECO:0007669"/>
    <property type="project" value="UniProtKB-KW"/>
</dbReference>
<dbReference type="GO" id="GO:0009252">
    <property type="term" value="P:peptidoglycan biosynthetic process"/>
    <property type="evidence" value="ECO:0007669"/>
    <property type="project" value="UniProtKB-UniRule"/>
</dbReference>
<dbReference type="GO" id="GO:0008360">
    <property type="term" value="P:regulation of cell shape"/>
    <property type="evidence" value="ECO:0007669"/>
    <property type="project" value="UniProtKB-KW"/>
</dbReference>
<dbReference type="GO" id="GO:0019277">
    <property type="term" value="P:UDP-N-acetylgalactosamine biosynthetic process"/>
    <property type="evidence" value="ECO:0007669"/>
    <property type="project" value="InterPro"/>
</dbReference>
<dbReference type="CDD" id="cd01555">
    <property type="entry name" value="UdpNAET"/>
    <property type="match status" value="1"/>
</dbReference>
<dbReference type="FunFam" id="3.65.10.10:FF:000002">
    <property type="entry name" value="UDP-N-acetylglucosamine 1-carboxyvinyltransferase"/>
    <property type="match status" value="1"/>
</dbReference>
<dbReference type="Gene3D" id="3.65.10.10">
    <property type="entry name" value="Enolpyruvate transferase domain"/>
    <property type="match status" value="2"/>
</dbReference>
<dbReference type="HAMAP" id="MF_00111">
    <property type="entry name" value="MurA"/>
    <property type="match status" value="1"/>
</dbReference>
<dbReference type="InterPro" id="IPR001986">
    <property type="entry name" value="Enolpyruvate_Tfrase_dom"/>
</dbReference>
<dbReference type="InterPro" id="IPR036968">
    <property type="entry name" value="Enolpyruvate_Tfrase_sf"/>
</dbReference>
<dbReference type="InterPro" id="IPR050068">
    <property type="entry name" value="MurA_subfamily"/>
</dbReference>
<dbReference type="InterPro" id="IPR013792">
    <property type="entry name" value="RNA3'P_cycl/enolpyr_Trfase_a/b"/>
</dbReference>
<dbReference type="InterPro" id="IPR005750">
    <property type="entry name" value="UDP_GlcNAc_COvinyl_MurA"/>
</dbReference>
<dbReference type="NCBIfam" id="TIGR01072">
    <property type="entry name" value="murA"/>
    <property type="match status" value="1"/>
</dbReference>
<dbReference type="NCBIfam" id="NF006873">
    <property type="entry name" value="PRK09369.1"/>
    <property type="match status" value="1"/>
</dbReference>
<dbReference type="PANTHER" id="PTHR43783">
    <property type="entry name" value="UDP-N-ACETYLGLUCOSAMINE 1-CARBOXYVINYLTRANSFERASE"/>
    <property type="match status" value="1"/>
</dbReference>
<dbReference type="PANTHER" id="PTHR43783:SF1">
    <property type="entry name" value="UDP-N-ACETYLGLUCOSAMINE 1-CARBOXYVINYLTRANSFERASE"/>
    <property type="match status" value="1"/>
</dbReference>
<dbReference type="Pfam" id="PF00275">
    <property type="entry name" value="EPSP_synthase"/>
    <property type="match status" value="1"/>
</dbReference>
<dbReference type="SUPFAM" id="SSF55205">
    <property type="entry name" value="EPT/RTPC-like"/>
    <property type="match status" value="1"/>
</dbReference>
<organism>
    <name type="scientific">Escherichia coli O45:K1 (strain S88 / ExPEC)</name>
    <dbReference type="NCBI Taxonomy" id="585035"/>
    <lineage>
        <taxon>Bacteria</taxon>
        <taxon>Pseudomonadati</taxon>
        <taxon>Pseudomonadota</taxon>
        <taxon>Gammaproteobacteria</taxon>
        <taxon>Enterobacterales</taxon>
        <taxon>Enterobacteriaceae</taxon>
        <taxon>Escherichia</taxon>
    </lineage>
</organism>
<keyword id="KW-0131">Cell cycle</keyword>
<keyword id="KW-0132">Cell division</keyword>
<keyword id="KW-0133">Cell shape</keyword>
<keyword id="KW-0961">Cell wall biogenesis/degradation</keyword>
<keyword id="KW-0963">Cytoplasm</keyword>
<keyword id="KW-0573">Peptidoglycan synthesis</keyword>
<keyword id="KW-0670">Pyruvate</keyword>
<keyword id="KW-1185">Reference proteome</keyword>
<keyword id="KW-0808">Transferase</keyword>